<organism>
    <name type="scientific">Coccidioides posadasii (strain RMSCC 757 / Silveira)</name>
    <name type="common">Valley fever fungus</name>
    <dbReference type="NCBI Taxonomy" id="443226"/>
    <lineage>
        <taxon>Eukaryota</taxon>
        <taxon>Fungi</taxon>
        <taxon>Dikarya</taxon>
        <taxon>Ascomycota</taxon>
        <taxon>Pezizomycotina</taxon>
        <taxon>Eurotiomycetes</taxon>
        <taxon>Eurotiomycetidae</taxon>
        <taxon>Onygenales</taxon>
        <taxon>Onygenaceae</taxon>
        <taxon>Coccidioides</taxon>
    </lineage>
</organism>
<comment type="function">
    <text evidence="1">Protease with a carboxypeptidase B-like function involved in the C-terminal processing of the lysine and arginine residues from protein precursors. Promotes cell fusion and is involved in the programmed cell death (By similarity).</text>
</comment>
<comment type="catalytic activity">
    <reaction>
        <text>Preferential release of a C-terminal arginine or lysine residue.</text>
        <dbReference type="EC" id="3.4.16.6"/>
    </reaction>
</comment>
<comment type="subcellular location">
    <subcellularLocation>
        <location evidence="1">Golgi apparatus</location>
        <location evidence="1">trans-Golgi network membrane</location>
        <topology evidence="1">Single-pass type I membrane protein</topology>
    </subcellularLocation>
</comment>
<comment type="similarity">
    <text evidence="4">Belongs to the peptidase S10 family.</text>
</comment>
<protein>
    <recommendedName>
        <fullName>Pheromone-processing carboxypeptidase KEX1</fullName>
        <ecNumber>3.4.16.6</ecNumber>
    </recommendedName>
    <alternativeName>
        <fullName>Carboxypeptidase D</fullName>
    </alternativeName>
</protein>
<keyword id="KW-0053">Apoptosis</keyword>
<keyword id="KW-0121">Carboxypeptidase</keyword>
<keyword id="KW-0325">Glycoprotein</keyword>
<keyword id="KW-0333">Golgi apparatus</keyword>
<keyword id="KW-0378">Hydrolase</keyword>
<keyword id="KW-0472">Membrane</keyword>
<keyword id="KW-0645">Protease</keyword>
<keyword id="KW-1185">Reference proteome</keyword>
<keyword id="KW-0732">Signal</keyword>
<keyword id="KW-0812">Transmembrane</keyword>
<keyword id="KW-1133">Transmembrane helix</keyword>
<name>KEX1_COCPS</name>
<sequence length="641" mass="71743">MRSTSTFTRTPAFLLHTLARWLLVWGVLGSSVVAEKKCASNYYVRSLPGQPDGPLLKMHAGHVEVDHKNNGNLFFWHFQNRHIANRQRTVIWLNGGPGCSSMDGALMEIGPYRLKDDHTLIYNEGSWDEFANILFVDQPVGTGFSYVNTNSYIHELDEMASHFVTFLEKWFELFPEYEHDDLYFAGESYAGQYIPYIAKAILDRNKNTTTQAQSRLWNLKGLLIGNGWISPVEQYQAYLTYAYKENLIQSGTDAAKRVERAHSECISELDSGGKDRIHAGACEKVLSAVLEVTRENGKCINMYDIRLRDEFPSCGMNWPPDLKHITPYLRRDDVISALHVNDDKRTGWRECTGAVSSNFNARNSKPSVQLLPEILESGIPITLFSGAKDFICNHIGTEQFIHNMQWSGGAGFELSPGVWAPRHDWTFEGEAAGYYQEARNLTYVLFYNASHMVPFDFGRRSRDMLDRFLGVDITSIGGNPADSRIDGEKGALTSVGNHPNSTTAEQREKEKLKAATWAAYYKSGEVALVVVAIAAAVWGFFIWRSRRQRQGSGYRGIYPNLNGLSSGSFSGFRNKRSSHDDIEAAADFDASELDTLRGTDDRSRGANGHGSVGGDSEDEDEKFGAQKESYHPSNMPSSSSS</sequence>
<evidence type="ECO:0000250" key="1"/>
<evidence type="ECO:0000255" key="2"/>
<evidence type="ECO:0000256" key="3">
    <source>
        <dbReference type="SAM" id="MobiDB-lite"/>
    </source>
</evidence>
<evidence type="ECO:0000305" key="4"/>
<accession>E9CS37</accession>
<reference key="1">
    <citation type="submission" date="2010-03" db="EMBL/GenBank/DDBJ databases">
        <title>The genome sequence of Coccidioides posadasii strain Silveira.</title>
        <authorList>
            <consortium name="The Broad Institute Genome Sequencing Center for Infectious Disease"/>
            <person name="Neafsey D."/>
            <person name="Orbach M."/>
            <person name="Henn M.R."/>
            <person name="Cole G.T."/>
            <person name="Galgiani J."/>
            <person name="Gardner M.J."/>
            <person name="Kirkland T.N."/>
            <person name="Taylor J.W."/>
            <person name="Young S.K."/>
            <person name="Zeng Q."/>
            <person name="Koehrsen M."/>
            <person name="Alvarado L."/>
            <person name="Berlin A."/>
            <person name="Borenstein D."/>
            <person name="Chapman S.B."/>
            <person name="Chen Z."/>
            <person name="Engels R."/>
            <person name="Freedman E."/>
            <person name="Gellesch M."/>
            <person name="Goldberg J."/>
            <person name="Griggs A."/>
            <person name="Gujja S."/>
            <person name="Heilman E."/>
            <person name="Heiman D."/>
            <person name="Howarth C."/>
            <person name="Jen D."/>
            <person name="Larson L."/>
            <person name="Mehta T."/>
            <person name="Neiman D."/>
            <person name="Park D."/>
            <person name="Pearson M."/>
            <person name="Richards J."/>
            <person name="Roberts A."/>
            <person name="Saif S."/>
            <person name="Shea T."/>
            <person name="Shenoy N."/>
            <person name="Sisk P."/>
            <person name="Stolte C."/>
            <person name="Sykes S."/>
            <person name="Walk T."/>
            <person name="White J."/>
            <person name="Yandava C."/>
            <person name="Haas B."/>
            <person name="Nusbaum C."/>
            <person name="Birren B."/>
        </authorList>
    </citation>
    <scope>NUCLEOTIDE SEQUENCE [LARGE SCALE GENOMIC DNA]</scope>
    <source>
        <strain>RMSCC 757 / Silveira</strain>
    </source>
</reference>
<feature type="signal peptide" evidence="2">
    <location>
        <begin position="1"/>
        <end position="34"/>
    </location>
</feature>
<feature type="chain" id="PRO_0000411915" description="Pheromone-processing carboxypeptidase KEX1">
    <location>
        <begin position="35"/>
        <end position="641"/>
    </location>
</feature>
<feature type="topological domain" description="Lumenal" evidence="2">
    <location>
        <begin position="35"/>
        <end position="522"/>
    </location>
</feature>
<feature type="transmembrane region" description="Helical" evidence="2">
    <location>
        <begin position="523"/>
        <end position="543"/>
    </location>
</feature>
<feature type="topological domain" description="Cytoplasmic" evidence="2">
    <location>
        <begin position="544"/>
        <end position="641"/>
    </location>
</feature>
<feature type="region of interest" description="Disordered" evidence="3">
    <location>
        <begin position="487"/>
        <end position="506"/>
    </location>
</feature>
<feature type="region of interest" description="Disordered" evidence="3">
    <location>
        <begin position="593"/>
        <end position="641"/>
    </location>
</feature>
<feature type="compositionally biased region" description="Polar residues" evidence="3">
    <location>
        <begin position="494"/>
        <end position="504"/>
    </location>
</feature>
<feature type="compositionally biased region" description="Basic and acidic residues" evidence="3">
    <location>
        <begin position="594"/>
        <end position="604"/>
    </location>
</feature>
<feature type="compositionally biased region" description="Polar residues" evidence="3">
    <location>
        <begin position="631"/>
        <end position="641"/>
    </location>
</feature>
<feature type="active site" evidence="1">
    <location>
        <position position="188"/>
    </location>
</feature>
<feature type="active site" evidence="1">
    <location>
        <position position="389"/>
    </location>
</feature>
<feature type="active site" evidence="1">
    <location>
        <position position="451"/>
    </location>
</feature>
<feature type="glycosylation site" description="N-linked (GlcNAc...) asparagine" evidence="2">
    <location>
        <position position="207"/>
    </location>
</feature>
<feature type="glycosylation site" description="N-linked (GlcNAc...) asparagine" evidence="2">
    <location>
        <position position="440"/>
    </location>
</feature>
<feature type="glycosylation site" description="N-linked (GlcNAc...) asparagine" evidence="2">
    <location>
        <position position="448"/>
    </location>
</feature>
<feature type="glycosylation site" description="N-linked (GlcNAc...) asparagine" evidence="2">
    <location>
        <position position="500"/>
    </location>
</feature>
<proteinExistence type="inferred from homology"/>
<gene>
    <name type="primary">KEX1</name>
    <name type="ORF">CPSG_01257</name>
</gene>
<dbReference type="EC" id="3.4.16.6"/>
<dbReference type="EMBL" id="GL636486">
    <property type="protein sequence ID" value="EFW23358.1"/>
    <property type="molecule type" value="Genomic_DNA"/>
</dbReference>
<dbReference type="RefSeq" id="XP_003070320.2">
    <property type="nucleotide sequence ID" value="XM_003070274.2"/>
</dbReference>
<dbReference type="SMR" id="E9CS37"/>
<dbReference type="STRING" id="443226.E9CS37"/>
<dbReference type="ESTHER" id="cocps-kex1">
    <property type="family name" value="Carboxypeptidase_S10"/>
</dbReference>
<dbReference type="GlyCosmos" id="E9CS37">
    <property type="glycosylation" value="4 sites, No reported glycans"/>
</dbReference>
<dbReference type="GeneID" id="9695815"/>
<dbReference type="VEuPathDB" id="FungiDB:CPSG_01257"/>
<dbReference type="VEuPathDB" id="FungiDB:D8B26_006848"/>
<dbReference type="eggNOG" id="KOG1282">
    <property type="taxonomic scope" value="Eukaryota"/>
</dbReference>
<dbReference type="HOGENOM" id="CLU_008523_11_0_1"/>
<dbReference type="OMA" id="EMADQFV"/>
<dbReference type="OrthoDB" id="29021at33183"/>
<dbReference type="Proteomes" id="UP000002497">
    <property type="component" value="Unassembled WGS sequence"/>
</dbReference>
<dbReference type="GO" id="GO:0016020">
    <property type="term" value="C:membrane"/>
    <property type="evidence" value="ECO:0007669"/>
    <property type="project" value="UniProtKB-KW"/>
</dbReference>
<dbReference type="GO" id="GO:0005802">
    <property type="term" value="C:trans-Golgi network"/>
    <property type="evidence" value="ECO:0007669"/>
    <property type="project" value="TreeGrafter"/>
</dbReference>
<dbReference type="GO" id="GO:0004185">
    <property type="term" value="F:serine-type carboxypeptidase activity"/>
    <property type="evidence" value="ECO:0007669"/>
    <property type="project" value="UniProtKB-EC"/>
</dbReference>
<dbReference type="GO" id="GO:0006915">
    <property type="term" value="P:apoptotic process"/>
    <property type="evidence" value="ECO:0007669"/>
    <property type="project" value="UniProtKB-KW"/>
</dbReference>
<dbReference type="GO" id="GO:0006508">
    <property type="term" value="P:proteolysis"/>
    <property type="evidence" value="ECO:0007669"/>
    <property type="project" value="UniProtKB-KW"/>
</dbReference>
<dbReference type="FunFam" id="3.40.50.1820:FF:000121">
    <property type="entry name" value="Carboxypeptidase D"/>
    <property type="match status" value="1"/>
</dbReference>
<dbReference type="Gene3D" id="3.40.50.1820">
    <property type="entry name" value="alpha/beta hydrolase"/>
    <property type="match status" value="1"/>
</dbReference>
<dbReference type="InterPro" id="IPR029058">
    <property type="entry name" value="AB_hydrolase_fold"/>
</dbReference>
<dbReference type="InterPro" id="IPR001563">
    <property type="entry name" value="Peptidase_S10"/>
</dbReference>
<dbReference type="PANTHER" id="PTHR11802:SF190">
    <property type="entry name" value="PHEROMONE-PROCESSING CARBOXYPEPTIDASE KEX1"/>
    <property type="match status" value="1"/>
</dbReference>
<dbReference type="PANTHER" id="PTHR11802">
    <property type="entry name" value="SERINE PROTEASE FAMILY S10 SERINE CARBOXYPEPTIDASE"/>
    <property type="match status" value="1"/>
</dbReference>
<dbReference type="Pfam" id="PF00450">
    <property type="entry name" value="Peptidase_S10"/>
    <property type="match status" value="1"/>
</dbReference>
<dbReference type="PRINTS" id="PR00724">
    <property type="entry name" value="CRBOXYPTASEC"/>
</dbReference>
<dbReference type="SUPFAM" id="SSF53474">
    <property type="entry name" value="alpha/beta-Hydrolases"/>
    <property type="match status" value="1"/>
</dbReference>